<evidence type="ECO:0000255" key="1">
    <source>
        <dbReference type="HAMAP-Rule" id="MF_00009"/>
    </source>
</evidence>
<reference key="1">
    <citation type="submission" date="2007-05" db="EMBL/GenBank/DDBJ databases">
        <title>Complete sequence of Thermosipho melanesiensis BI429.</title>
        <authorList>
            <consortium name="US DOE Joint Genome Institute"/>
            <person name="Copeland A."/>
            <person name="Lucas S."/>
            <person name="Lapidus A."/>
            <person name="Barry K."/>
            <person name="Glavina del Rio T."/>
            <person name="Dalin E."/>
            <person name="Tice H."/>
            <person name="Pitluck S."/>
            <person name="Chertkov O."/>
            <person name="Brettin T."/>
            <person name="Bruce D."/>
            <person name="Detter J.C."/>
            <person name="Han C."/>
            <person name="Schmutz J."/>
            <person name="Larimer F."/>
            <person name="Land M."/>
            <person name="Hauser L."/>
            <person name="Kyrpides N."/>
            <person name="Mikhailova N."/>
            <person name="Nelson K."/>
            <person name="Gogarten J.P."/>
            <person name="Noll K."/>
            <person name="Richardson P."/>
        </authorList>
    </citation>
    <scope>NUCLEOTIDE SEQUENCE [LARGE SCALE GENOMIC DNA]</scope>
    <source>
        <strain>DSM 12029 / CIP 104789 / BI429</strain>
    </source>
</reference>
<sequence>MVTTNKNIEEKYIRTVDEVTRNELGKEVNINLVFLSKEKIKKINREFRNINSETDVLTFVYGDDDLFAEIYLCEDVIEENAKKFSNTYEKELLMVLIHAALHCSGYDHEYDKTNAKKMFDLQERYYEKYLKKYGMDNV</sequence>
<gene>
    <name evidence="1" type="primary">ybeY</name>
    <name type="ordered locus">Tmel_0577</name>
</gene>
<dbReference type="EC" id="3.1.-.-" evidence="1"/>
<dbReference type="EMBL" id="CP000716">
    <property type="protein sequence ID" value="ABR30444.1"/>
    <property type="molecule type" value="Genomic_DNA"/>
</dbReference>
<dbReference type="RefSeq" id="WP_012056805.1">
    <property type="nucleotide sequence ID" value="NC_009616.1"/>
</dbReference>
<dbReference type="SMR" id="A6LKJ3"/>
<dbReference type="STRING" id="391009.Tmel_0577"/>
<dbReference type="KEGG" id="tme:Tmel_0577"/>
<dbReference type="eggNOG" id="COG0319">
    <property type="taxonomic scope" value="Bacteria"/>
</dbReference>
<dbReference type="HOGENOM" id="CLU_106710_3_3_0"/>
<dbReference type="OrthoDB" id="9807740at2"/>
<dbReference type="Proteomes" id="UP000001110">
    <property type="component" value="Chromosome"/>
</dbReference>
<dbReference type="GO" id="GO:0005737">
    <property type="term" value="C:cytoplasm"/>
    <property type="evidence" value="ECO:0007669"/>
    <property type="project" value="UniProtKB-SubCell"/>
</dbReference>
<dbReference type="GO" id="GO:0004222">
    <property type="term" value="F:metalloendopeptidase activity"/>
    <property type="evidence" value="ECO:0007669"/>
    <property type="project" value="InterPro"/>
</dbReference>
<dbReference type="GO" id="GO:0004521">
    <property type="term" value="F:RNA endonuclease activity"/>
    <property type="evidence" value="ECO:0007669"/>
    <property type="project" value="UniProtKB-UniRule"/>
</dbReference>
<dbReference type="GO" id="GO:0008270">
    <property type="term" value="F:zinc ion binding"/>
    <property type="evidence" value="ECO:0007669"/>
    <property type="project" value="UniProtKB-UniRule"/>
</dbReference>
<dbReference type="GO" id="GO:0006364">
    <property type="term" value="P:rRNA processing"/>
    <property type="evidence" value="ECO:0007669"/>
    <property type="project" value="UniProtKB-UniRule"/>
</dbReference>
<dbReference type="Gene3D" id="3.40.390.30">
    <property type="entry name" value="Metalloproteases ('zincins'), catalytic domain"/>
    <property type="match status" value="1"/>
</dbReference>
<dbReference type="HAMAP" id="MF_00009">
    <property type="entry name" value="Endoribonucl_YbeY"/>
    <property type="match status" value="1"/>
</dbReference>
<dbReference type="InterPro" id="IPR023091">
    <property type="entry name" value="MetalPrtase_cat_dom_sf_prd"/>
</dbReference>
<dbReference type="InterPro" id="IPR002036">
    <property type="entry name" value="YbeY"/>
</dbReference>
<dbReference type="NCBIfam" id="TIGR00043">
    <property type="entry name" value="rRNA maturation RNase YbeY"/>
    <property type="match status" value="1"/>
</dbReference>
<dbReference type="PANTHER" id="PTHR46986">
    <property type="entry name" value="ENDORIBONUCLEASE YBEY, CHLOROPLASTIC"/>
    <property type="match status" value="1"/>
</dbReference>
<dbReference type="PANTHER" id="PTHR46986:SF1">
    <property type="entry name" value="ENDORIBONUCLEASE YBEY, CHLOROPLASTIC"/>
    <property type="match status" value="1"/>
</dbReference>
<dbReference type="Pfam" id="PF02130">
    <property type="entry name" value="YbeY"/>
    <property type="match status" value="1"/>
</dbReference>
<dbReference type="SUPFAM" id="SSF55486">
    <property type="entry name" value="Metalloproteases ('zincins'), catalytic domain"/>
    <property type="match status" value="1"/>
</dbReference>
<comment type="function">
    <text evidence="1">Single strand-specific metallo-endoribonuclease involved in late-stage 70S ribosome quality control and in maturation of the 3' terminus of the 16S rRNA.</text>
</comment>
<comment type="cofactor">
    <cofactor evidence="1">
        <name>Zn(2+)</name>
        <dbReference type="ChEBI" id="CHEBI:29105"/>
    </cofactor>
    <text evidence="1">Binds 1 zinc ion.</text>
</comment>
<comment type="subcellular location">
    <subcellularLocation>
        <location evidence="1">Cytoplasm</location>
    </subcellularLocation>
</comment>
<comment type="similarity">
    <text evidence="1">Belongs to the endoribonuclease YbeY family.</text>
</comment>
<name>YBEY_THEM4</name>
<accession>A6LKJ3</accession>
<feature type="chain" id="PRO_0000321788" description="Endoribonuclease YbeY">
    <location>
        <begin position="1"/>
        <end position="138"/>
    </location>
</feature>
<feature type="binding site" evidence="1">
    <location>
        <position position="98"/>
    </location>
    <ligand>
        <name>Zn(2+)</name>
        <dbReference type="ChEBI" id="CHEBI:29105"/>
        <note>catalytic</note>
    </ligand>
</feature>
<feature type="binding site" evidence="1">
    <location>
        <position position="102"/>
    </location>
    <ligand>
        <name>Zn(2+)</name>
        <dbReference type="ChEBI" id="CHEBI:29105"/>
        <note>catalytic</note>
    </ligand>
</feature>
<feature type="binding site" evidence="1">
    <location>
        <position position="108"/>
    </location>
    <ligand>
        <name>Zn(2+)</name>
        <dbReference type="ChEBI" id="CHEBI:29105"/>
        <note>catalytic</note>
    </ligand>
</feature>
<organism>
    <name type="scientific">Thermosipho melanesiensis (strain DSM 12029 / CIP 104789 / BI429)</name>
    <dbReference type="NCBI Taxonomy" id="391009"/>
    <lineage>
        <taxon>Bacteria</taxon>
        <taxon>Thermotogati</taxon>
        <taxon>Thermotogota</taxon>
        <taxon>Thermotogae</taxon>
        <taxon>Thermotogales</taxon>
        <taxon>Fervidobacteriaceae</taxon>
        <taxon>Thermosipho</taxon>
    </lineage>
</organism>
<keyword id="KW-0963">Cytoplasm</keyword>
<keyword id="KW-0255">Endonuclease</keyword>
<keyword id="KW-0378">Hydrolase</keyword>
<keyword id="KW-0479">Metal-binding</keyword>
<keyword id="KW-0540">Nuclease</keyword>
<keyword id="KW-0690">Ribosome biogenesis</keyword>
<keyword id="KW-0698">rRNA processing</keyword>
<keyword id="KW-0862">Zinc</keyword>
<proteinExistence type="inferred from homology"/>
<protein>
    <recommendedName>
        <fullName evidence="1">Endoribonuclease YbeY</fullName>
        <ecNumber evidence="1">3.1.-.-</ecNumber>
    </recommendedName>
</protein>